<keyword id="KW-0012">Acyltransferase</keyword>
<keyword id="KW-0028">Amino-acid biosynthesis</keyword>
<keyword id="KW-0055">Arginine biosynthesis</keyword>
<keyword id="KW-0068">Autocatalytic cleavage</keyword>
<keyword id="KW-0496">Mitochondrion</keyword>
<keyword id="KW-0511">Multifunctional enzyme</keyword>
<keyword id="KW-1185">Reference proteome</keyword>
<keyword id="KW-0808">Transferase</keyword>
<name>ARGJ_HETP5</name>
<organism>
    <name type="scientific">Heterostelium pallidum (strain ATCC 26659 / Pp 5 / PN500)</name>
    <name type="common">Cellular slime mold</name>
    <name type="synonym">Polysphondylium pallidum</name>
    <dbReference type="NCBI Taxonomy" id="670386"/>
    <lineage>
        <taxon>Eukaryota</taxon>
        <taxon>Amoebozoa</taxon>
        <taxon>Evosea</taxon>
        <taxon>Eumycetozoa</taxon>
        <taxon>Dictyostelia</taxon>
        <taxon>Acytosteliales</taxon>
        <taxon>Acytosteliaceae</taxon>
        <taxon>Heterostelium</taxon>
    </lineage>
</organism>
<feature type="chain" id="PRO_0000397972" description="Arginine biosynthesis bifunctional protein ArgJ alpha chain" evidence="1">
    <location>
        <begin position="1"/>
        <end position="203"/>
    </location>
</feature>
<feature type="chain" id="PRO_0000397973" description="Arginine biosynthesis bifunctional protein ArgJ beta chain" evidence="1">
    <location>
        <begin position="204"/>
        <end position="435"/>
    </location>
</feature>
<feature type="active site" description="Nucleophile" evidence="1">
    <location>
        <position position="204"/>
    </location>
</feature>
<feature type="binding site" evidence="1">
    <location>
        <position position="167"/>
    </location>
    <ligand>
        <name>substrate</name>
    </ligand>
</feature>
<feature type="binding site" evidence="1">
    <location>
        <position position="193"/>
    </location>
    <ligand>
        <name>substrate</name>
    </ligand>
</feature>
<feature type="binding site" evidence="1">
    <location>
        <position position="204"/>
    </location>
    <ligand>
        <name>substrate</name>
    </ligand>
</feature>
<feature type="binding site" evidence="1">
    <location>
        <position position="291"/>
    </location>
    <ligand>
        <name>substrate</name>
    </ligand>
</feature>
<feature type="binding site" evidence="1">
    <location>
        <position position="430"/>
    </location>
    <ligand>
        <name>substrate</name>
    </ligand>
</feature>
<feature type="binding site" evidence="1">
    <location>
        <position position="435"/>
    </location>
    <ligand>
        <name>substrate</name>
    </ligand>
</feature>
<feature type="site" description="Involved in the stabilization of negative charge on the oxyanion by the formation of the oxyanion hole" evidence="1">
    <location>
        <position position="130"/>
    </location>
</feature>
<feature type="site" description="Involved in the stabilization of negative charge on the oxyanion by the formation of the oxyanion hole" evidence="1">
    <location>
        <position position="131"/>
    </location>
</feature>
<feature type="site" description="Cleavage; by autolysis" evidence="1">
    <location>
        <begin position="203"/>
        <end position="204"/>
    </location>
</feature>
<comment type="function">
    <text evidence="1">Catalyzes two activities which are involved in the cyclic version of arginine biosynthesis: the synthesis of acetylglutamate from glutamate and acetyl-CoA, and of ornithine by transacetylation between acetylornithine and glutamate.</text>
</comment>
<comment type="catalytic activity">
    <reaction evidence="1">
        <text>N(2)-acetyl-L-ornithine + L-glutamate = N-acetyl-L-glutamate + L-ornithine</text>
        <dbReference type="Rhea" id="RHEA:15349"/>
        <dbReference type="ChEBI" id="CHEBI:29985"/>
        <dbReference type="ChEBI" id="CHEBI:44337"/>
        <dbReference type="ChEBI" id="CHEBI:46911"/>
        <dbReference type="ChEBI" id="CHEBI:57805"/>
        <dbReference type="EC" id="2.3.1.35"/>
    </reaction>
</comment>
<comment type="catalytic activity">
    <reaction evidence="1">
        <text>L-glutamate + acetyl-CoA = N-acetyl-L-glutamate + CoA + H(+)</text>
        <dbReference type="Rhea" id="RHEA:24292"/>
        <dbReference type="ChEBI" id="CHEBI:15378"/>
        <dbReference type="ChEBI" id="CHEBI:29985"/>
        <dbReference type="ChEBI" id="CHEBI:44337"/>
        <dbReference type="ChEBI" id="CHEBI:57287"/>
        <dbReference type="ChEBI" id="CHEBI:57288"/>
        <dbReference type="EC" id="2.3.1.1"/>
    </reaction>
</comment>
<comment type="pathway">
    <text evidence="1">Amino-acid biosynthesis; L-arginine biosynthesis; L-ornithine and N-acetyl-L-glutamate from L-glutamate and N(2)-acetyl-L-ornithine (cyclic): step 1/1.</text>
</comment>
<comment type="pathway">
    <text evidence="1">Amino-acid biosynthesis; L-arginine biosynthesis; N(2)-acetyl-L-ornithine from L-glutamate: step 1/4.</text>
</comment>
<comment type="subunit">
    <text evidence="1">Heterodimer of an alpha and a beta chain.</text>
</comment>
<comment type="subcellular location">
    <subcellularLocation>
        <location evidence="1">Mitochondrion matrix</location>
    </subcellularLocation>
</comment>
<comment type="PTM">
    <text evidence="1">The alpha and beta chains are autoproteolytically processed from a single precursor protein within the mitochondrion.</text>
</comment>
<comment type="miscellaneous">
    <text evidence="1">This protein may be expected to contain an N-terminal transit peptide but none has been predicted.</text>
</comment>
<comment type="similarity">
    <text evidence="1">Belongs to the ArgJ family.</text>
</comment>
<gene>
    <name type="ORF">PPL_00785</name>
</gene>
<sequence length="435" mass="46458">MYKSITTLLKQQPQSILRNYSTDKFPRGFKTGTAACGLKKTGNKDICIIHSSAPCNVAAVFTENKVKAAPVLLSKQLLETNNYKGFNSLVINSGGANACTGEQGLKNAKTMSNLTSSLLKAPQASLVMSTGIIGQQLDMSKVEKGIADAVTTLNESDWISAARAIMTTDKVPKLAQKSVSLNGGEVHIVGICKGAGMIHPNMATMLCTVCTDASISEDCLRALLKHSVHYSFNSINVDGDMSTNDTVAIFANGSAGNKHITDTTSSDFLQLQEAVREVTTRLAQMIVRDAEGASKFVTIKIHGADTEQNGHIVANSISTSSLVKSALYGEDANWGRVLAAVGYSGVDIDPLKVCMWFAKGDGKDVGLGKKNDPETSMQFLEKGTPLAKDENKAAQLLSNNDVAIVVELGMGKASSTMWTCDLTEEYVRANSHYRT</sequence>
<dbReference type="EC" id="2.3.1.35" evidence="1"/>
<dbReference type="EC" id="2.3.1.1" evidence="1"/>
<dbReference type="EMBL" id="ADBJ01000003">
    <property type="protein sequence ID" value="EFA86223.1"/>
    <property type="molecule type" value="Genomic_DNA"/>
</dbReference>
<dbReference type="SMR" id="D3AXF4"/>
<dbReference type="FunCoup" id="D3AXF4">
    <property type="interactions" value="177"/>
</dbReference>
<dbReference type="STRING" id="670386.D3AXF4"/>
<dbReference type="MEROPS" id="T05.001"/>
<dbReference type="InParanoid" id="D3AXF4"/>
<dbReference type="OMA" id="WGRIVMA"/>
<dbReference type="UniPathway" id="UPA00068">
    <property type="reaction ID" value="UER00106"/>
</dbReference>
<dbReference type="UniPathway" id="UPA00068">
    <property type="reaction ID" value="UER00111"/>
</dbReference>
<dbReference type="Proteomes" id="UP000001396">
    <property type="component" value="Unassembled WGS sequence"/>
</dbReference>
<dbReference type="GO" id="GO:0005759">
    <property type="term" value="C:mitochondrial matrix"/>
    <property type="evidence" value="ECO:0007669"/>
    <property type="project" value="UniProtKB-SubCell"/>
</dbReference>
<dbReference type="GO" id="GO:0004358">
    <property type="term" value="F:glutamate N-acetyltransferase activity"/>
    <property type="evidence" value="ECO:0007669"/>
    <property type="project" value="UniProtKB-UniRule"/>
</dbReference>
<dbReference type="GO" id="GO:0004042">
    <property type="term" value="F:L-glutamate N-acetyltransferase activity"/>
    <property type="evidence" value="ECO:0007669"/>
    <property type="project" value="UniProtKB-UniRule"/>
</dbReference>
<dbReference type="GO" id="GO:0006526">
    <property type="term" value="P:L-arginine biosynthetic process"/>
    <property type="evidence" value="ECO:0007669"/>
    <property type="project" value="UniProtKB-UniRule"/>
</dbReference>
<dbReference type="GO" id="GO:0006592">
    <property type="term" value="P:ornithine biosynthetic process"/>
    <property type="evidence" value="ECO:0007669"/>
    <property type="project" value="TreeGrafter"/>
</dbReference>
<dbReference type="CDD" id="cd02152">
    <property type="entry name" value="OAT"/>
    <property type="match status" value="1"/>
</dbReference>
<dbReference type="FunFam" id="3.10.20.340:FF:000001">
    <property type="entry name" value="Arginine biosynthesis bifunctional protein ArgJ, chloroplastic"/>
    <property type="match status" value="1"/>
</dbReference>
<dbReference type="FunFam" id="3.60.70.12:FF:000001">
    <property type="entry name" value="Arginine biosynthesis bifunctional protein ArgJ, chloroplastic"/>
    <property type="match status" value="1"/>
</dbReference>
<dbReference type="FunFam" id="3.30.2330.10:FF:000001">
    <property type="entry name" value="Arginine biosynthesis bifunctional protein ArgJ, mitochondrial"/>
    <property type="match status" value="1"/>
</dbReference>
<dbReference type="Gene3D" id="3.30.2330.10">
    <property type="entry name" value="arginine biosynthesis bifunctional protein suprefamily"/>
    <property type="match status" value="1"/>
</dbReference>
<dbReference type="Gene3D" id="3.10.20.340">
    <property type="entry name" value="ArgJ beta chain, C-terminal domain"/>
    <property type="match status" value="1"/>
</dbReference>
<dbReference type="Gene3D" id="3.60.70.12">
    <property type="entry name" value="L-amino peptidase D-ALA esterase/amidase"/>
    <property type="match status" value="1"/>
</dbReference>
<dbReference type="HAMAP" id="MF_01106">
    <property type="entry name" value="ArgJ"/>
    <property type="match status" value="1"/>
</dbReference>
<dbReference type="InterPro" id="IPR002813">
    <property type="entry name" value="Arg_biosynth_ArgJ"/>
</dbReference>
<dbReference type="InterPro" id="IPR016117">
    <property type="entry name" value="ArgJ-like_dom_sf"/>
</dbReference>
<dbReference type="InterPro" id="IPR042195">
    <property type="entry name" value="ArgJ_beta_C"/>
</dbReference>
<dbReference type="NCBIfam" id="TIGR00120">
    <property type="entry name" value="ArgJ"/>
    <property type="match status" value="1"/>
</dbReference>
<dbReference type="NCBIfam" id="NF003802">
    <property type="entry name" value="PRK05388.1"/>
    <property type="match status" value="1"/>
</dbReference>
<dbReference type="PANTHER" id="PTHR23100">
    <property type="entry name" value="ARGININE BIOSYNTHESIS BIFUNCTIONAL PROTEIN ARGJ"/>
    <property type="match status" value="1"/>
</dbReference>
<dbReference type="PANTHER" id="PTHR23100:SF0">
    <property type="entry name" value="ARGININE BIOSYNTHESIS BIFUNCTIONAL PROTEIN ARGJ, MITOCHONDRIAL"/>
    <property type="match status" value="1"/>
</dbReference>
<dbReference type="Pfam" id="PF01960">
    <property type="entry name" value="ArgJ"/>
    <property type="match status" value="1"/>
</dbReference>
<dbReference type="SUPFAM" id="SSF56266">
    <property type="entry name" value="DmpA/ArgJ-like"/>
    <property type="match status" value="1"/>
</dbReference>
<accession>D3AXF4</accession>
<protein>
    <recommendedName>
        <fullName evidence="1">Arginine biosynthesis bifunctional protein ArgJ, mitochondrial</fullName>
    </recommendedName>
    <domain>
        <recommendedName>
            <fullName evidence="1">Glutamate N-acetyltransferase</fullName>
            <shortName evidence="1">GAT</shortName>
            <ecNumber evidence="1">2.3.1.35</ecNumber>
        </recommendedName>
        <alternativeName>
            <fullName evidence="1">Ornithine acetyltransferase</fullName>
            <shortName evidence="1">OATase</shortName>
        </alternativeName>
        <alternativeName>
            <fullName evidence="1">Ornithine transacetylase</fullName>
        </alternativeName>
    </domain>
    <domain>
        <recommendedName>
            <fullName evidence="1">Amino-acid acetyltransferase</fullName>
            <ecNumber evidence="1">2.3.1.1</ecNumber>
        </recommendedName>
        <alternativeName>
            <fullName evidence="1">N-acetylglutamate synthase</fullName>
            <shortName evidence="1">AGS</shortName>
        </alternativeName>
    </domain>
    <component>
        <recommendedName>
            <fullName evidence="1">Arginine biosynthesis bifunctional protein ArgJ alpha chain</fullName>
        </recommendedName>
    </component>
    <component>
        <recommendedName>
            <fullName evidence="1">Arginine biosynthesis bifunctional protein ArgJ beta chain</fullName>
        </recommendedName>
    </component>
</protein>
<proteinExistence type="inferred from homology"/>
<reference key="1">
    <citation type="journal article" date="2011" name="Genome Res.">
        <title>Phylogeny-wide analysis of social amoeba genomes highlights ancient origins for complex intercellular communication.</title>
        <authorList>
            <person name="Heidel A.J."/>
            <person name="Lawal H.M."/>
            <person name="Felder M."/>
            <person name="Schilde C."/>
            <person name="Helps N.R."/>
            <person name="Tunggal B."/>
            <person name="Rivero F."/>
            <person name="John U."/>
            <person name="Schleicher M."/>
            <person name="Eichinger L."/>
            <person name="Platzer M."/>
            <person name="Noegel A.A."/>
            <person name="Schaap P."/>
            <person name="Gloeckner G."/>
        </authorList>
    </citation>
    <scope>NUCLEOTIDE SEQUENCE [LARGE SCALE GENOMIC DNA]</scope>
    <source>
        <strain>ATCC 26659 / Pp 5 / PN500</strain>
    </source>
</reference>
<evidence type="ECO:0000255" key="1">
    <source>
        <dbReference type="HAMAP-Rule" id="MF_03124"/>
    </source>
</evidence>